<feature type="chain" id="PRO_0000110856" description="Aspartate--tRNA(Asp/Asn) ligase">
    <location>
        <begin position="1"/>
        <end position="582"/>
    </location>
</feature>
<feature type="region of interest" description="Aspartate" evidence="1">
    <location>
        <begin position="201"/>
        <end position="204"/>
    </location>
</feature>
<feature type="binding site" evidence="1">
    <location>
        <position position="177"/>
    </location>
    <ligand>
        <name>L-aspartate</name>
        <dbReference type="ChEBI" id="CHEBI:29991"/>
    </ligand>
</feature>
<feature type="binding site" evidence="1">
    <location>
        <begin position="223"/>
        <end position="225"/>
    </location>
    <ligand>
        <name>ATP</name>
        <dbReference type="ChEBI" id="CHEBI:30616"/>
    </ligand>
</feature>
<feature type="binding site" evidence="1">
    <location>
        <position position="223"/>
    </location>
    <ligand>
        <name>L-aspartate</name>
        <dbReference type="ChEBI" id="CHEBI:29991"/>
    </ligand>
</feature>
<feature type="binding site" evidence="1">
    <location>
        <position position="232"/>
    </location>
    <ligand>
        <name>ATP</name>
        <dbReference type="ChEBI" id="CHEBI:30616"/>
    </ligand>
</feature>
<feature type="binding site" evidence="1">
    <location>
        <position position="447"/>
    </location>
    <ligand>
        <name>L-aspartate</name>
        <dbReference type="ChEBI" id="CHEBI:29991"/>
    </ligand>
</feature>
<feature type="binding site" evidence="1">
    <location>
        <position position="481"/>
    </location>
    <ligand>
        <name>ATP</name>
        <dbReference type="ChEBI" id="CHEBI:30616"/>
    </ligand>
</feature>
<feature type="binding site" evidence="1">
    <location>
        <position position="488"/>
    </location>
    <ligand>
        <name>L-aspartate</name>
        <dbReference type="ChEBI" id="CHEBI:29991"/>
    </ligand>
</feature>
<feature type="binding site" evidence="1">
    <location>
        <begin position="533"/>
        <end position="536"/>
    </location>
    <ligand>
        <name>ATP</name>
        <dbReference type="ChEBI" id="CHEBI:30616"/>
    </ligand>
</feature>
<feature type="site" description="Important for tRNA non-discrimination" evidence="1">
    <location>
        <position position="32"/>
    </location>
</feature>
<feature type="site" description="Important for tRNA non-discrimination" evidence="1">
    <location>
        <position position="84"/>
    </location>
</feature>
<gene>
    <name evidence="1" type="primary">aspS</name>
    <name type="ordered locus">CT_542</name>
</gene>
<dbReference type="EC" id="6.1.1.23" evidence="1"/>
<dbReference type="EMBL" id="AE001273">
    <property type="protein sequence ID" value="AAC68144.1"/>
    <property type="molecule type" value="Genomic_DNA"/>
</dbReference>
<dbReference type="PIR" id="G71500">
    <property type="entry name" value="G71500"/>
</dbReference>
<dbReference type="RefSeq" id="NP_220057.1">
    <property type="nucleotide sequence ID" value="NC_000117.1"/>
</dbReference>
<dbReference type="RefSeq" id="WP_009871906.1">
    <property type="nucleotide sequence ID" value="NC_000117.1"/>
</dbReference>
<dbReference type="SMR" id="O84546"/>
<dbReference type="FunCoup" id="O84546">
    <property type="interactions" value="266"/>
</dbReference>
<dbReference type="STRING" id="272561.CT_542"/>
<dbReference type="EnsemblBacteria" id="AAC68144">
    <property type="protein sequence ID" value="AAC68144"/>
    <property type="gene ID" value="CT_542"/>
</dbReference>
<dbReference type="GeneID" id="884319"/>
<dbReference type="KEGG" id="ctr:CT_542"/>
<dbReference type="PATRIC" id="fig|272561.5.peg.587"/>
<dbReference type="HOGENOM" id="CLU_014330_3_2_0"/>
<dbReference type="InParanoid" id="O84546"/>
<dbReference type="OrthoDB" id="9802326at2"/>
<dbReference type="SABIO-RK" id="O84546"/>
<dbReference type="Proteomes" id="UP000000431">
    <property type="component" value="Chromosome"/>
</dbReference>
<dbReference type="GO" id="GO:0005737">
    <property type="term" value="C:cytoplasm"/>
    <property type="evidence" value="ECO:0007669"/>
    <property type="project" value="UniProtKB-SubCell"/>
</dbReference>
<dbReference type="GO" id="GO:0004815">
    <property type="term" value="F:aspartate-tRNA ligase activity"/>
    <property type="evidence" value="ECO:0000318"/>
    <property type="project" value="GO_Central"/>
</dbReference>
<dbReference type="GO" id="GO:0050560">
    <property type="term" value="F:aspartate-tRNA(Asn) ligase activity"/>
    <property type="evidence" value="ECO:0007669"/>
    <property type="project" value="UniProtKB-EC"/>
</dbReference>
<dbReference type="GO" id="GO:0005524">
    <property type="term" value="F:ATP binding"/>
    <property type="evidence" value="ECO:0007669"/>
    <property type="project" value="UniProtKB-UniRule"/>
</dbReference>
<dbReference type="GO" id="GO:0003676">
    <property type="term" value="F:nucleic acid binding"/>
    <property type="evidence" value="ECO:0007669"/>
    <property type="project" value="InterPro"/>
</dbReference>
<dbReference type="GO" id="GO:0006422">
    <property type="term" value="P:aspartyl-tRNA aminoacylation"/>
    <property type="evidence" value="ECO:0000318"/>
    <property type="project" value="GO_Central"/>
</dbReference>
<dbReference type="CDD" id="cd00777">
    <property type="entry name" value="AspRS_core"/>
    <property type="match status" value="1"/>
</dbReference>
<dbReference type="CDD" id="cd04317">
    <property type="entry name" value="EcAspRS_like_N"/>
    <property type="match status" value="1"/>
</dbReference>
<dbReference type="Gene3D" id="3.30.930.10">
    <property type="entry name" value="Bira Bifunctional Protein, Domain 2"/>
    <property type="match status" value="1"/>
</dbReference>
<dbReference type="Gene3D" id="3.30.1360.30">
    <property type="entry name" value="GAD-like domain"/>
    <property type="match status" value="1"/>
</dbReference>
<dbReference type="Gene3D" id="2.40.50.140">
    <property type="entry name" value="Nucleic acid-binding proteins"/>
    <property type="match status" value="1"/>
</dbReference>
<dbReference type="HAMAP" id="MF_00044">
    <property type="entry name" value="Asp_tRNA_synth_type1"/>
    <property type="match status" value="1"/>
</dbReference>
<dbReference type="InterPro" id="IPR004364">
    <property type="entry name" value="Aa-tRNA-synt_II"/>
</dbReference>
<dbReference type="InterPro" id="IPR006195">
    <property type="entry name" value="aa-tRNA-synth_II"/>
</dbReference>
<dbReference type="InterPro" id="IPR045864">
    <property type="entry name" value="aa-tRNA-synth_II/BPL/LPL"/>
</dbReference>
<dbReference type="InterPro" id="IPR004524">
    <property type="entry name" value="Asp-tRNA-ligase_1"/>
</dbReference>
<dbReference type="InterPro" id="IPR047089">
    <property type="entry name" value="Asp-tRNA-ligase_1_N"/>
</dbReference>
<dbReference type="InterPro" id="IPR002312">
    <property type="entry name" value="Asp/Asn-tRNA-synth_IIb"/>
</dbReference>
<dbReference type="InterPro" id="IPR047090">
    <property type="entry name" value="AspRS_core"/>
</dbReference>
<dbReference type="InterPro" id="IPR004115">
    <property type="entry name" value="GAD-like_sf"/>
</dbReference>
<dbReference type="InterPro" id="IPR029351">
    <property type="entry name" value="GAD_dom"/>
</dbReference>
<dbReference type="InterPro" id="IPR012340">
    <property type="entry name" value="NA-bd_OB-fold"/>
</dbReference>
<dbReference type="InterPro" id="IPR004365">
    <property type="entry name" value="NA-bd_OB_tRNA"/>
</dbReference>
<dbReference type="NCBIfam" id="TIGR00459">
    <property type="entry name" value="aspS_bact"/>
    <property type="match status" value="1"/>
</dbReference>
<dbReference type="NCBIfam" id="NF001750">
    <property type="entry name" value="PRK00476.1"/>
    <property type="match status" value="1"/>
</dbReference>
<dbReference type="PANTHER" id="PTHR22594:SF5">
    <property type="entry name" value="ASPARTATE--TRNA LIGASE, MITOCHONDRIAL"/>
    <property type="match status" value="1"/>
</dbReference>
<dbReference type="PANTHER" id="PTHR22594">
    <property type="entry name" value="ASPARTYL/LYSYL-TRNA SYNTHETASE"/>
    <property type="match status" value="1"/>
</dbReference>
<dbReference type="Pfam" id="PF02938">
    <property type="entry name" value="GAD"/>
    <property type="match status" value="1"/>
</dbReference>
<dbReference type="Pfam" id="PF00152">
    <property type="entry name" value="tRNA-synt_2"/>
    <property type="match status" value="1"/>
</dbReference>
<dbReference type="Pfam" id="PF01336">
    <property type="entry name" value="tRNA_anti-codon"/>
    <property type="match status" value="1"/>
</dbReference>
<dbReference type="PRINTS" id="PR01042">
    <property type="entry name" value="TRNASYNTHASP"/>
</dbReference>
<dbReference type="SUPFAM" id="SSF55681">
    <property type="entry name" value="Class II aaRS and biotin synthetases"/>
    <property type="match status" value="1"/>
</dbReference>
<dbReference type="SUPFAM" id="SSF55261">
    <property type="entry name" value="GAD domain-like"/>
    <property type="match status" value="1"/>
</dbReference>
<dbReference type="SUPFAM" id="SSF50249">
    <property type="entry name" value="Nucleic acid-binding proteins"/>
    <property type="match status" value="1"/>
</dbReference>
<dbReference type="PROSITE" id="PS50862">
    <property type="entry name" value="AA_TRNA_LIGASE_II"/>
    <property type="match status" value="1"/>
</dbReference>
<protein>
    <recommendedName>
        <fullName evidence="1">Aspartate--tRNA(Asp/Asn) ligase</fullName>
        <ecNumber evidence="1">6.1.1.23</ecNumber>
    </recommendedName>
    <alternativeName>
        <fullName evidence="1">Aspartyl-tRNA synthetase</fullName>
        <shortName evidence="1">AspRS</shortName>
    </alternativeName>
    <alternativeName>
        <fullName evidence="1">Non-discriminating aspartyl-tRNA synthetase</fullName>
        <shortName evidence="1">ND-AspRS</shortName>
    </alternativeName>
</protein>
<evidence type="ECO:0000255" key="1">
    <source>
        <dbReference type="HAMAP-Rule" id="MF_00044"/>
    </source>
</evidence>
<evidence type="ECO:0000269" key="2">
    <source>
    </source>
</evidence>
<keyword id="KW-0030">Aminoacyl-tRNA synthetase</keyword>
<keyword id="KW-0067">ATP-binding</keyword>
<keyword id="KW-0963">Cytoplasm</keyword>
<keyword id="KW-0436">Ligase</keyword>
<keyword id="KW-0547">Nucleotide-binding</keyword>
<keyword id="KW-0648">Protein biosynthesis</keyword>
<keyword id="KW-1185">Reference proteome</keyword>
<name>SYDND_CHLTR</name>
<proteinExistence type="evidence at protein level"/>
<accession>O84546</accession>
<comment type="function">
    <text evidence="1 2">Aspartyl-tRNA synthetase with relaxed tRNA specificity since it is able to aspartylate not only its cognate tRNA(Asp) but also tRNA(Asn). Reaction proceeds in two steps: L-aspartate is first activated by ATP to form Asp-AMP and then transferred to the acceptor end of tRNA(Asp/Asn).</text>
</comment>
<comment type="catalytic activity">
    <reaction evidence="1 2">
        <text>tRNA(Asx) + L-aspartate + ATP = L-aspartyl-tRNA(Asx) + AMP + diphosphate</text>
        <dbReference type="Rhea" id="RHEA:18349"/>
        <dbReference type="Rhea" id="RHEA-COMP:9710"/>
        <dbReference type="Rhea" id="RHEA-COMP:9711"/>
        <dbReference type="ChEBI" id="CHEBI:29991"/>
        <dbReference type="ChEBI" id="CHEBI:30616"/>
        <dbReference type="ChEBI" id="CHEBI:33019"/>
        <dbReference type="ChEBI" id="CHEBI:78442"/>
        <dbReference type="ChEBI" id="CHEBI:78516"/>
        <dbReference type="ChEBI" id="CHEBI:456215"/>
        <dbReference type="EC" id="6.1.1.23"/>
    </reaction>
</comment>
<comment type="biophysicochemical properties">
    <kinetics>
        <KM evidence="2">0.95 uM for tRNA(Asp)</KM>
        <KM evidence="2">2.76 uM for tRNA(Asn)</KM>
    </kinetics>
</comment>
<comment type="subunit">
    <text evidence="1">Homodimer.</text>
</comment>
<comment type="subcellular location">
    <subcellularLocation>
        <location evidence="1">Cytoplasm</location>
    </subcellularLocation>
</comment>
<comment type="similarity">
    <text evidence="1">Belongs to the class-II aminoacyl-tRNA synthetase family. Type 1 subfamily.</text>
</comment>
<reference key="1">
    <citation type="journal article" date="1998" name="Science">
        <title>Genome sequence of an obligate intracellular pathogen of humans: Chlamydia trachomatis.</title>
        <authorList>
            <person name="Stephens R.S."/>
            <person name="Kalman S."/>
            <person name="Lammel C.J."/>
            <person name="Fan J."/>
            <person name="Marathe R."/>
            <person name="Aravind L."/>
            <person name="Mitchell W.P."/>
            <person name="Olinger L."/>
            <person name="Tatusov R.L."/>
            <person name="Zhao Q."/>
            <person name="Koonin E.V."/>
            <person name="Davis R.W."/>
        </authorList>
    </citation>
    <scope>NUCLEOTIDE SEQUENCE [LARGE SCALE GENOMIC DNA]</scope>
    <source>
        <strain>ATCC VR-885 / DSM 19411 / UW-3/Cx</strain>
    </source>
</reference>
<reference key="2">
    <citation type="journal article" date="2001" name="J. Biol. Chem.">
        <title>A single amidotransferase forms asparaginyl-tRNA and glutaminyl-tRNA in Chlamydia trachomatis.</title>
        <authorList>
            <person name="Raczniak G."/>
            <person name="Becker H.D."/>
            <person name="Min B."/>
            <person name="Soll D."/>
        </authorList>
    </citation>
    <scope>FUNCTION AS A NON-DISCRIMINATING ASPRS</scope>
    <scope>CATALYTIC ACTIVITY</scope>
    <scope>SUBSTRATE SPECIFICITY</scope>
    <scope>KINETIC PARAMETERS</scope>
    <source>
        <strain>ATCC VR-885 / DSM 19411 / UW-3/Cx</strain>
    </source>
</reference>
<sequence length="582" mass="66227">MKYRTHKCNELSLDHVGEHVRLSGWVHRYRNHGGVVFIDLRDCFGITQIVCRQEENPELHQLMDQVRSEWVLCVEGLVCARLEGMENPNLVTGSIEVEVSSLEVLSRAQNLPFSISDEHINVNEELRLTYRYLDMRRGDILDRLMCRHKVMLACRQYLDEQGFTEVVTPILGKSTPEGARDYLVPSRIYPGNFYALPQSPQLFKQILMVGGLDRYFQIATCFRDEDLRADRQPEFTQIDMEMSFGGPEDLFPVVEELVARLFAVKGIELKAPFLRMTYQEAKDSYGTDKPDLRFGLRLKNCCEYARKFTFSIFLDQLAYGGTVKGFCVPGGADMSRKQLDIYTDFVKRYGAMGLVWIKKQDGGVSSNVAKFASEDVFQEMFEAFEAKDQDILLLIAAPEAVANQALDHLRRLIARERQLYDSTQYNFVWITDFPLFAKEEGELCPEHHPFTAPLDEDISLLDSDPFAVRSSSYDLVLNGYEIASGSQRIHNPDLQNKIFALLKLSQESVKEKFGFFIDALSFGTPPHLGIALGLDRIMMVLTGAETIREVIAFPKTQKAGDLMMSAPSEILPIQLKELGLKL</sequence>
<organism>
    <name type="scientific">Chlamydia trachomatis serovar D (strain ATCC VR-885 / DSM 19411 / UW-3/Cx)</name>
    <dbReference type="NCBI Taxonomy" id="272561"/>
    <lineage>
        <taxon>Bacteria</taxon>
        <taxon>Pseudomonadati</taxon>
        <taxon>Chlamydiota</taxon>
        <taxon>Chlamydiia</taxon>
        <taxon>Chlamydiales</taxon>
        <taxon>Chlamydiaceae</taxon>
        <taxon>Chlamydia/Chlamydophila group</taxon>
        <taxon>Chlamydia</taxon>
    </lineage>
</organism>